<proteinExistence type="evidence at protein level"/>
<organism>
    <name type="scientific">Synechocystis sp. (strain ATCC 27184 / PCC 6803 / Kazusa)</name>
    <dbReference type="NCBI Taxonomy" id="1111708"/>
    <lineage>
        <taxon>Bacteria</taxon>
        <taxon>Bacillati</taxon>
        <taxon>Cyanobacteriota</taxon>
        <taxon>Cyanophyceae</taxon>
        <taxon>Synechococcales</taxon>
        <taxon>Merismopediaceae</taxon>
        <taxon>Synechocystis</taxon>
    </lineage>
</organism>
<protein>
    <recommendedName>
        <fullName>Transcription regulator LexA</fullName>
    </recommendedName>
    <alternativeName>
        <fullName evidence="7">LexA-related repressor</fullName>
    </alternativeName>
</protein>
<feature type="chain" id="PRO_0000434786" description="Transcription regulator LexA">
    <location>
        <begin position="1"/>
        <end position="203"/>
    </location>
</feature>
<feature type="region of interest" description="Binds hox promoter DNA" evidence="3">
    <location>
        <begin position="1"/>
        <end position="88"/>
    </location>
</feature>
<accession>P73722</accession>
<evidence type="ECO:0000269" key="1">
    <source>
    </source>
</evidence>
<evidence type="ECO:0000269" key="2">
    <source>
    </source>
</evidence>
<evidence type="ECO:0000269" key="3">
    <source>
    </source>
</evidence>
<evidence type="ECO:0000269" key="4">
    <source>
    </source>
</evidence>
<evidence type="ECO:0000269" key="5">
    <source>
    </source>
</evidence>
<evidence type="ECO:0000269" key="6">
    <source>
    </source>
</evidence>
<evidence type="ECO:0000303" key="7">
    <source>
    </source>
</evidence>
<evidence type="ECO:0000305" key="8"/>
<evidence type="ECO:0000305" key="9">
    <source>
    </source>
</evidence>
<evidence type="ECO:0000305" key="10">
    <source>
    </source>
</evidence>
<evidence type="ECO:0000305" key="11">
    <source>
    </source>
</evidence>
<sequence length="203" mass="22744">MEPLTRAQKELFDWLVSYIDETQHAPSIRQMMRAMNLRSPAPIQSRLERLRNKGYVDWTDGKARTLRILHQKPKGVSVIGELKGGELVEADAEEVEKIDFAPLMKKSSVFALRVMSNDLVDDFIVEGDMLILRSVTGEEEIEDGELVAASIKGGKIAIKRYYQDGTKVVLKASNNKGPGQELKASDVEIQGILMGVWRNFQGV</sequence>
<name>LEXA_SYNY3</name>
<dbReference type="EMBL" id="BA000022">
    <property type="protein sequence ID" value="BAA17770.1"/>
    <property type="molecule type" value="Genomic_DNA"/>
</dbReference>
<dbReference type="PIR" id="S74809">
    <property type="entry name" value="S74809"/>
</dbReference>
<dbReference type="SMR" id="P73722"/>
<dbReference type="FunCoup" id="P73722">
    <property type="interactions" value="258"/>
</dbReference>
<dbReference type="STRING" id="1148.gene:10498637"/>
<dbReference type="PaxDb" id="1148-1652852"/>
<dbReference type="EnsemblBacteria" id="BAA17770">
    <property type="protein sequence ID" value="BAA17770"/>
    <property type="gene ID" value="BAA17770"/>
</dbReference>
<dbReference type="KEGG" id="syn:sll1626"/>
<dbReference type="eggNOG" id="COG1974">
    <property type="taxonomic scope" value="Bacteria"/>
</dbReference>
<dbReference type="InParanoid" id="P73722"/>
<dbReference type="PhylomeDB" id="P73722"/>
<dbReference type="Proteomes" id="UP000001425">
    <property type="component" value="Chromosome"/>
</dbReference>
<dbReference type="CollecTF" id="EXPREG_00000be0"/>
<dbReference type="GO" id="GO:0005737">
    <property type="term" value="C:cytoplasm"/>
    <property type="evidence" value="ECO:0007669"/>
    <property type="project" value="UniProtKB-SubCell"/>
</dbReference>
<dbReference type="GO" id="GO:0032993">
    <property type="term" value="C:protein-DNA complex"/>
    <property type="evidence" value="ECO:0000315"/>
    <property type="project" value="CollecTF"/>
</dbReference>
<dbReference type="GO" id="GO:0001217">
    <property type="term" value="F:DNA-binding transcription repressor activity"/>
    <property type="evidence" value="ECO:0000318"/>
    <property type="project" value="GO_Central"/>
</dbReference>
<dbReference type="GO" id="GO:0043565">
    <property type="term" value="F:sequence-specific DNA binding"/>
    <property type="evidence" value="ECO:0000315"/>
    <property type="project" value="CollecTF"/>
</dbReference>
<dbReference type="GO" id="GO:0004252">
    <property type="term" value="F:serine-type endopeptidase activity"/>
    <property type="evidence" value="ECO:0007669"/>
    <property type="project" value="InterPro"/>
</dbReference>
<dbReference type="GO" id="GO:0006260">
    <property type="term" value="P:DNA replication"/>
    <property type="evidence" value="ECO:0007669"/>
    <property type="project" value="UniProtKB-KW"/>
</dbReference>
<dbReference type="GO" id="GO:0045892">
    <property type="term" value="P:negative regulation of DNA-templated transcription"/>
    <property type="evidence" value="ECO:0000314"/>
    <property type="project" value="CollecTF"/>
</dbReference>
<dbReference type="GO" id="GO:0045893">
    <property type="term" value="P:positive regulation of DNA-templated transcription"/>
    <property type="evidence" value="ECO:0000270"/>
    <property type="project" value="CollecTF"/>
</dbReference>
<dbReference type="GO" id="GO:0006508">
    <property type="term" value="P:proteolysis"/>
    <property type="evidence" value="ECO:0007669"/>
    <property type="project" value="InterPro"/>
</dbReference>
<dbReference type="GO" id="GO:0009432">
    <property type="term" value="P:SOS response"/>
    <property type="evidence" value="ECO:0000318"/>
    <property type="project" value="GO_Central"/>
</dbReference>
<dbReference type="Gene3D" id="2.10.109.10">
    <property type="entry name" value="Umud Fragment, subunit A"/>
    <property type="match status" value="1"/>
</dbReference>
<dbReference type="Gene3D" id="1.10.10.10">
    <property type="entry name" value="Winged helix-like DNA-binding domain superfamily/Winged helix DNA-binding domain"/>
    <property type="match status" value="1"/>
</dbReference>
<dbReference type="InterPro" id="IPR006200">
    <property type="entry name" value="LexA"/>
</dbReference>
<dbReference type="InterPro" id="IPR036286">
    <property type="entry name" value="LexA/Signal_pep-like_sf"/>
</dbReference>
<dbReference type="InterPro" id="IPR006199">
    <property type="entry name" value="LexA_DNA-bd_dom"/>
</dbReference>
<dbReference type="InterPro" id="IPR050077">
    <property type="entry name" value="LexA_repressor"/>
</dbReference>
<dbReference type="InterPro" id="IPR015927">
    <property type="entry name" value="Peptidase_S24_S26A/B/C"/>
</dbReference>
<dbReference type="InterPro" id="IPR036388">
    <property type="entry name" value="WH-like_DNA-bd_sf"/>
</dbReference>
<dbReference type="InterPro" id="IPR036390">
    <property type="entry name" value="WH_DNA-bd_sf"/>
</dbReference>
<dbReference type="NCBIfam" id="TIGR00498">
    <property type="entry name" value="lexA"/>
    <property type="match status" value="1"/>
</dbReference>
<dbReference type="PANTHER" id="PTHR33516">
    <property type="entry name" value="LEXA REPRESSOR"/>
    <property type="match status" value="1"/>
</dbReference>
<dbReference type="PANTHER" id="PTHR33516:SF2">
    <property type="entry name" value="LEXA REPRESSOR-RELATED"/>
    <property type="match status" value="1"/>
</dbReference>
<dbReference type="Pfam" id="PF01726">
    <property type="entry name" value="LexA_DNA_bind"/>
    <property type="match status" value="1"/>
</dbReference>
<dbReference type="Pfam" id="PF00717">
    <property type="entry name" value="Peptidase_S24"/>
    <property type="match status" value="1"/>
</dbReference>
<dbReference type="SUPFAM" id="SSF51306">
    <property type="entry name" value="LexA/Signal peptidase"/>
    <property type="match status" value="1"/>
</dbReference>
<dbReference type="SUPFAM" id="SSF46785">
    <property type="entry name" value="Winged helix' DNA-binding domain"/>
    <property type="match status" value="1"/>
</dbReference>
<keyword id="KW-0010">Activator</keyword>
<keyword id="KW-0963">Cytoplasm</keyword>
<keyword id="KW-0235">DNA replication</keyword>
<keyword id="KW-0238">DNA-binding</keyword>
<keyword id="KW-1185">Reference proteome</keyword>
<keyword id="KW-0678">Repressor</keyword>
<keyword id="KW-0804">Transcription</keyword>
<keyword id="KW-0805">Transcription regulation</keyword>
<comment type="function">
    <text evidence="1 2 3 4 5">A probable transcription regulator, probably involved in carbon metabolism (PubMed:15225304). Binds and probably regulates expression of bidirectional hydrogenase (hoxEFUHY), probably activates its transcription (PubMed:16102913, PubMed:16238629). A possible regulator of redox-responsive genes. Binds 2 direct repeats of the DNA with sequence 5'-CTA-N(9)-CTA-3' in the upstream region of both its own gene (includes the transcription start site) and crhR (includes the initiation codon) in a sequence-specific manner; does not bind crhR RNA (PubMed:18555801). Binds to the crhR gene, represses its transcription (PubMed:16840531).</text>
</comment>
<comment type="subunit">
    <text evidence="5 10">Monomer in solution, probably binds DNA as a dimer.</text>
</comment>
<comment type="subcellular location">
    <subcellularLocation>
        <location evidence="6">Cytoplasm</location>
    </subcellularLocation>
    <text evidence="6">Localized in the innermost region of the cytoplasm, associated with DNA in an evenly distributed pattern no changes are seen when cells are grown in the dark.</text>
</comment>
<comment type="induction">
    <text evidence="1 4 6">Expressed in light grown cells, strongly repressed post-transcriptionally by UV-C light, repressed by H(2)O(2) and SeO(3) but not by SeO(4) (PubMed:15225304). Strongly expressed in dark-grown cells, induced in light-grown cells by glucose, repressed at 20 degrees Celsius (PubMed:16840531). Not induced following UV light exposure between 150 and 600 J/m(2), suggesting it does not respond to DNA damage (PubMed:15225304). Despite changes in transcript levels, protein levels are constant under light-dark regimes, anaerobic growth and in presence of glucose (at protein level) (PubMed:21642463).</text>
</comment>
<comment type="domain">
    <text evidence="3">The N-terminal fragment (residues 1-88) binds hox promoter DNA.</text>
</comment>
<comment type="PTM">
    <text evidence="6">5 protein spots of the same molecular weight but different pI are seen in vivo; all of them bind DNA.</text>
</comment>
<comment type="disruption phenotype">
    <text evidence="1 2">Probably essential, it cannot be deleted (PubMed:15225304). Depleted strain have decreased levels of hox hydrogenase (PubMed:16102913). In depletion studies using merodiploid strains 32 genes are up-regulated while 25 are down-regulated; many of them are known or predicted to be involved in carbon metabolism; cells grow poorly in the absence of inorganic carbon (PubMed:15225304).</text>
</comment>
<comment type="miscellaneous">
    <text evidence="9">This bacterium is considerably more resistant to UV and gamma irradiation than E.coli; the E.coli-like SOS regulon model is not an appropriate model for DNA repair in this cyanobacterium.</text>
</comment>
<comment type="similarity">
    <text evidence="8">Belongs to the peptidase S24 family.</text>
</comment>
<comment type="caution">
    <text evidence="11">Does not encode the amino acids known to be needed in E.coli for autocatalytic cleavage, probably acts differently from E.coli LexA.</text>
</comment>
<reference key="1">
    <citation type="journal article" date="1996" name="DNA Res.">
        <title>Sequence analysis of the genome of the unicellular cyanobacterium Synechocystis sp. strain PCC6803. II. Sequence determination of the entire genome and assignment of potential protein-coding regions.</title>
        <authorList>
            <person name="Kaneko T."/>
            <person name="Sato S."/>
            <person name="Kotani H."/>
            <person name="Tanaka A."/>
            <person name="Asamizu E."/>
            <person name="Nakamura Y."/>
            <person name="Miyajima N."/>
            <person name="Hirosawa M."/>
            <person name="Sugiura M."/>
            <person name="Sasamoto S."/>
            <person name="Kimura T."/>
            <person name="Hosouchi T."/>
            <person name="Matsuno A."/>
            <person name="Muraki A."/>
            <person name="Nakazaki N."/>
            <person name="Naruo K."/>
            <person name="Okumura S."/>
            <person name="Shimpo S."/>
            <person name="Takeuchi C."/>
            <person name="Wada T."/>
            <person name="Watanabe A."/>
            <person name="Yamada M."/>
            <person name="Yasuda M."/>
            <person name="Tabata S."/>
        </authorList>
    </citation>
    <scope>NUCLEOTIDE SEQUENCE [LARGE SCALE GENOMIC DNA]</scope>
    <source>
        <strain>ATCC 27184 / PCC 6803 / Kazusa</strain>
    </source>
</reference>
<reference key="2">
    <citation type="journal article" date="2004" name="Mol. Microbiol.">
        <title>Function and regulation of the cyanobacterial genes lexA, recA and ruvB: LexA is critical to the survival of cells facing inorganic carbon starvation.</title>
        <authorList>
            <person name="Domain F."/>
            <person name="Houot L."/>
            <person name="Chauvat F."/>
            <person name="Cassier-Chauvat C."/>
        </authorList>
    </citation>
    <scope>FUNCTION</scope>
    <scope>INDUCTION</scope>
    <scope>DISRUPTION PHENOTYPE</scope>
    <source>
        <strain>ATCC 27184 / PCC 6803 / Kazusa</strain>
    </source>
</reference>
<reference key="3">
    <citation type="journal article" date="2005" name="FEMS Microbiol. Lett.">
        <title>LexA, a transcription regulator binding in the promoter region of the bidirectional hydrogenase in the cyanobacterium Synechocystis sp. PCC 6803.</title>
        <authorList>
            <person name="Oliveira P."/>
            <person name="Lindblad P."/>
        </authorList>
    </citation>
    <scope>FUNCTION</scope>
    <scope>DNA-BINDING</scope>
    <source>
        <strain>ATCC 27184 / PCC 6803 / Kazusa</strain>
    </source>
</reference>
<reference key="4">
    <citation type="journal article" date="2005" name="Mol. Microbiol.">
        <title>LexA regulates the bidirectional hydrogenase in the cyanobacterium Synechocystis sp. PCC 6803 as a transcription activator.</title>
        <authorList>
            <person name="Gutekunst K."/>
            <person name="Phunpruch S."/>
            <person name="Schwarz C."/>
            <person name="Schuchardt S."/>
            <person name="Schulz-Friedrich R."/>
            <person name="Appel J."/>
        </authorList>
    </citation>
    <scope>FUNCTION</scope>
    <scope>SUBUNIT</scope>
    <scope>DOMAIN</scope>
    <scope>DISRUPTION PHENOTYPE</scope>
    <scope>DNA-BINDING</scope>
    <source>
        <strain>ATCC 27184 / PCC 6803 / Kazusa</strain>
    </source>
</reference>
<reference key="5">
    <citation type="journal article" date="2006" name="Nucleic Acids Res.">
        <title>A LexA-related protein regulates redox-sensitive expression of the cyanobacterial RNA helicase, crhR.</title>
        <authorList>
            <person name="Patterson-Fortin L.M."/>
            <person name="Colvin K.R."/>
            <person name="Owttrim G.W."/>
        </authorList>
    </citation>
    <scope>FUNCTION</scope>
    <scope>INDUCTION</scope>
    <scope>DNA-BINDING</scope>
    <source>
        <strain>ATCC 27184 / PCC 6803 / Kazusa</strain>
    </source>
</reference>
<reference key="6">
    <citation type="journal article" date="2008" name="FEBS Lett.">
        <title>A Synechocystis LexA-orthologue binds direct repeats in target genes.</title>
        <authorList>
            <person name="Patterson-Fortin L.M."/>
            <person name="Owttrim G.W."/>
        </authorList>
    </citation>
    <scope>FUNCTION</scope>
    <scope>SUBUNIT</scope>
    <scope>DNA-BINDING</scope>
    <source>
        <strain>ATCC 27184 / PCC 6803 / Kazusa</strain>
    </source>
</reference>
<reference key="7">
    <citation type="journal article" date="2011" name="J. Bacteriol.">
        <title>Novel insights into the regulation of LexA in the cyanobacterium Synechocystis sp. Strain PCC 6803.</title>
        <authorList>
            <person name="Oliveira P."/>
            <person name="Lindblad P."/>
        </authorList>
    </citation>
    <scope>SUBCELLULAR LOCATION</scope>
    <scope>INDUCTION</scope>
    <scope>POST-TRANSLATIONAL MODIFICATION</scope>
</reference>
<gene>
    <name type="primary">lexA</name>
    <name type="ordered locus">sll1626</name>
</gene>